<feature type="signal peptide" evidence="3">
    <location>
        <begin position="1"/>
        <end position="33"/>
    </location>
</feature>
<feature type="chain" id="PRO_0000001345" description="Alpha-amylase">
    <location>
        <begin position="34"/>
        <end position="919"/>
    </location>
</feature>
<feature type="region of interest" description="Disordered" evidence="2">
    <location>
        <begin position="704"/>
        <end position="729"/>
    </location>
</feature>
<feature type="compositionally biased region" description="Basic residues" evidence="2">
    <location>
        <begin position="707"/>
        <end position="724"/>
    </location>
</feature>
<feature type="active site" description="Nucleophile" evidence="1">
    <location>
        <position position="312"/>
    </location>
</feature>
<feature type="active site" description="Proton donor" evidence="1">
    <location>
        <position position="346"/>
    </location>
</feature>
<feature type="binding site" evidence="1">
    <location>
        <position position="182"/>
    </location>
    <ligand>
        <name>Ca(2+)</name>
        <dbReference type="ChEBI" id="CHEBI:29108"/>
    </ligand>
</feature>
<feature type="binding site" evidence="1">
    <location>
        <position position="281"/>
    </location>
    <ligand>
        <name>Ca(2+)</name>
        <dbReference type="ChEBI" id="CHEBI:29108"/>
    </ligand>
</feature>
<feature type="binding site" evidence="1">
    <location>
        <position position="316"/>
    </location>
    <ligand>
        <name>Ca(2+)</name>
        <dbReference type="ChEBI" id="CHEBI:29108"/>
    </ligand>
</feature>
<feature type="site" description="Transition state stabilizer" evidence="1">
    <location>
        <position position="417"/>
    </location>
</feature>
<organism>
    <name type="scientific">Streptomyces lividans</name>
    <dbReference type="NCBI Taxonomy" id="1916"/>
    <lineage>
        <taxon>Bacteria</taxon>
        <taxon>Bacillati</taxon>
        <taxon>Actinomycetota</taxon>
        <taxon>Actinomycetes</taxon>
        <taxon>Kitasatosporales</taxon>
        <taxon>Streptomycetaceae</taxon>
        <taxon>Streptomyces</taxon>
    </lineage>
</organism>
<keyword id="KW-0106">Calcium</keyword>
<keyword id="KW-0119">Carbohydrate metabolism</keyword>
<keyword id="KW-0903">Direct protein sequencing</keyword>
<keyword id="KW-0326">Glycosidase</keyword>
<keyword id="KW-0378">Hydrolase</keyword>
<keyword id="KW-0479">Metal-binding</keyword>
<keyword id="KW-0964">Secreted</keyword>
<keyword id="KW-0732">Signal</keyword>
<comment type="catalytic activity">
    <reaction>
        <text>Endohydrolysis of (1-&gt;4)-alpha-D-glucosidic linkages in polysaccharides containing three or more (1-&gt;4)-alpha-linked D-glucose units.</text>
        <dbReference type="EC" id="3.2.1.1"/>
    </reaction>
</comment>
<comment type="cofactor">
    <cofactor evidence="1">
        <name>Ca(2+)</name>
        <dbReference type="ChEBI" id="CHEBI:29108"/>
    </cofactor>
    <text evidence="1">Binds 1 Ca(2+) ion per subunit.</text>
</comment>
<comment type="subunit">
    <text evidence="1">Monomer.</text>
</comment>
<comment type="subcellular location">
    <subcellularLocation>
        <location>Secreted</location>
    </subcellularLocation>
</comment>
<comment type="similarity">
    <text evidence="4">Belongs to the glycosyl hydrolase 13 family.</text>
</comment>
<evidence type="ECO:0000250" key="1"/>
<evidence type="ECO:0000256" key="2">
    <source>
        <dbReference type="SAM" id="MobiDB-lite"/>
    </source>
</evidence>
<evidence type="ECO:0000269" key="3">
    <source>
    </source>
</evidence>
<evidence type="ECO:0000305" key="4"/>
<protein>
    <recommendedName>
        <fullName>Alpha-amylase</fullName>
        <ecNumber>3.2.1.1</ecNumber>
    </recommendedName>
    <alternativeName>
        <fullName>1,4-alpha-D-glucan glucanohydrolase</fullName>
    </alternativeName>
</protein>
<reference key="1">
    <citation type="journal article" date="1993" name="Biochim. Biophys. Acta">
        <title>Cloning and characterization of an alpha-amylase gene from Streptomyces lividans.</title>
        <authorList>
            <person name="Tsao L.-S."/>
            <person name="Lin L.-L."/>
            <person name="Chen J.-C."/>
            <person name="Chen J.-H."/>
            <person name="Hsu W.-H."/>
        </authorList>
    </citation>
    <scope>NUCLEOTIDE SEQUENCE [GENOMIC DNA]</scope>
    <scope>PROTEIN SEQUENCE OF 34-43</scope>
    <source>
        <strain>TK24</strain>
    </source>
</reference>
<reference key="2">
    <citation type="journal article" date="1993" name="Biochim. Biophys. Acta">
        <authorList>
            <person name="Tsao L.-S."/>
            <person name="Lin L.-L."/>
            <person name="Chen J.-C."/>
            <person name="Chen J.-H."/>
            <person name="Hsu W.-H."/>
        </authorList>
    </citation>
    <scope>ERRATUM OF PUBMED:8424949</scope>
</reference>
<dbReference type="EC" id="3.2.1.1"/>
<dbReference type="EMBL" id="X70255">
    <property type="protein sequence ID" value="CAA49759.1"/>
    <property type="molecule type" value="Genomic_DNA"/>
</dbReference>
<dbReference type="PIR" id="S28179">
    <property type="entry name" value="S28179"/>
</dbReference>
<dbReference type="SMR" id="Q05884"/>
<dbReference type="CAZy" id="CBM41">
    <property type="family name" value="Carbohydrate-Binding Module Family 41"/>
</dbReference>
<dbReference type="CAZy" id="GH13">
    <property type="family name" value="Glycoside Hydrolase Family 13"/>
</dbReference>
<dbReference type="GO" id="GO:0005576">
    <property type="term" value="C:extracellular region"/>
    <property type="evidence" value="ECO:0007669"/>
    <property type="project" value="UniProtKB-SubCell"/>
</dbReference>
<dbReference type="GO" id="GO:0004556">
    <property type="term" value="F:alpha-amylase activity"/>
    <property type="evidence" value="ECO:0007669"/>
    <property type="project" value="UniProtKB-EC"/>
</dbReference>
<dbReference type="GO" id="GO:0030246">
    <property type="term" value="F:carbohydrate binding"/>
    <property type="evidence" value="ECO:0007669"/>
    <property type="project" value="InterPro"/>
</dbReference>
<dbReference type="GO" id="GO:0046872">
    <property type="term" value="F:metal ion binding"/>
    <property type="evidence" value="ECO:0007669"/>
    <property type="project" value="UniProtKB-KW"/>
</dbReference>
<dbReference type="GO" id="GO:0005975">
    <property type="term" value="P:carbohydrate metabolic process"/>
    <property type="evidence" value="ECO:0007669"/>
    <property type="project" value="InterPro"/>
</dbReference>
<dbReference type="CDD" id="cd11339">
    <property type="entry name" value="AmyAc_bac_CMD_like_2"/>
    <property type="match status" value="1"/>
</dbReference>
<dbReference type="CDD" id="cd10315">
    <property type="entry name" value="CBM41_pullulanase"/>
    <property type="match status" value="2"/>
</dbReference>
<dbReference type="Gene3D" id="2.60.40.1110">
    <property type="match status" value="2"/>
</dbReference>
<dbReference type="Gene3D" id="3.20.20.80">
    <property type="entry name" value="Glycosidases"/>
    <property type="match status" value="1"/>
</dbReference>
<dbReference type="Gene3D" id="2.60.40.1180">
    <property type="entry name" value="Golgi alpha-mannosidase II"/>
    <property type="match status" value="1"/>
</dbReference>
<dbReference type="Gene3D" id="2.60.40.10">
    <property type="entry name" value="Immunoglobulins"/>
    <property type="match status" value="1"/>
</dbReference>
<dbReference type="InterPro" id="IPR006048">
    <property type="entry name" value="A-amylase/branching_C"/>
</dbReference>
<dbReference type="InterPro" id="IPR013784">
    <property type="entry name" value="Carb-bd-like_fold"/>
</dbReference>
<dbReference type="InterPro" id="IPR005323">
    <property type="entry name" value="CBM41_pullulanase"/>
</dbReference>
<dbReference type="InterPro" id="IPR006047">
    <property type="entry name" value="Glyco_hydro_13_cat_dom"/>
</dbReference>
<dbReference type="InterPro" id="IPR013780">
    <property type="entry name" value="Glyco_hydro_b"/>
</dbReference>
<dbReference type="InterPro" id="IPR017853">
    <property type="entry name" value="Glycoside_hydrolase_SF"/>
</dbReference>
<dbReference type="InterPro" id="IPR013783">
    <property type="entry name" value="Ig-like_fold"/>
</dbReference>
<dbReference type="PANTHER" id="PTHR10357">
    <property type="entry name" value="ALPHA-AMYLASE FAMILY MEMBER"/>
    <property type="match status" value="1"/>
</dbReference>
<dbReference type="PANTHER" id="PTHR10357:SF209">
    <property type="entry name" value="PERIPLASMIC ALPHA-AMYLASE"/>
    <property type="match status" value="1"/>
</dbReference>
<dbReference type="Pfam" id="PF00128">
    <property type="entry name" value="Alpha-amylase"/>
    <property type="match status" value="1"/>
</dbReference>
<dbReference type="Pfam" id="PF02806">
    <property type="entry name" value="Alpha-amylase_C"/>
    <property type="match status" value="1"/>
</dbReference>
<dbReference type="Pfam" id="PF03714">
    <property type="entry name" value="PUD"/>
    <property type="match status" value="2"/>
</dbReference>
<dbReference type="SMART" id="SM00642">
    <property type="entry name" value="Aamy"/>
    <property type="match status" value="1"/>
</dbReference>
<dbReference type="SUPFAM" id="SSF51445">
    <property type="entry name" value="(Trans)glycosidases"/>
    <property type="match status" value="1"/>
</dbReference>
<dbReference type="SUPFAM" id="SSF51011">
    <property type="entry name" value="Glycosyl hydrolase domain"/>
    <property type="match status" value="1"/>
</dbReference>
<dbReference type="SUPFAM" id="SSF49452">
    <property type="entry name" value="Starch-binding domain-like"/>
    <property type="match status" value="2"/>
</dbReference>
<gene>
    <name type="primary">amy</name>
</gene>
<accession>Q05884</accession>
<name>AMY_STRLI</name>
<sequence length="919" mass="100642">MPATRRTARVRRVAAVTVTALAAALLPPLAARADTPPAPPSDAKLAKTAARHDLTREQFYFSCRTLRQRGRRERPRRLTGTRLTTGYDPTDKGFYQGGDLKGLTEKLDYIKGLGTTSIWMAPIFKNQPVQGTGKDASAGYHGYWITDFTQVDPHFGTNKDLKNLISKAHAKGMKVFFDVITNHTADVVDYEEKSYDYLSKGAFPYLTKDGQPFDDADYADGERRFPRVDSGSFPRTPTVPTAKKNLKVPSWLNDPAMYHNRGDSTWAGESATYGDFNGLDDLWTERPEVVGGMEKIYQRWVEDFAIDGFRIDTVKHVDMEFWTQWATALDAYAAKKGRDDFFMFGEVYSADTSVTAPYVTQGRLDSTLDFPFQDAARAYASQGGSARKLAAVFGDDYKYTTDKANAYEQVTFLGNHDMGRIGTFLKQDAPEAGDAELLKKDRLANELMFLSRGNPVIYYGDEQGFTGAGGDKDARQPMFASRTADYLDDDQLGTDRTHAEAAYDTSAPLYRQISALAELRKANPALADGVQTERYAADGAGIYAFSRTDAKTGTEYVVAFNNAGTEPSAAFATGSAGMTFRGLYGTDATVKSGADSKVTVTVPARSAVVLKAAGRLAAPAAEPTISLHAPDPGATGTVELSADVAGGQLNRVVFAAQTGDGKWRTLGTADHAPYKVTHTVDADTPAGTALRYKAVVVDSAGRTASGRLHHRHPARRGGAHRRLPGPRGRPLQARRRELRRLGPVRLGRPRRREAHHLARHPPLHRPGRLRAFAYVKLKPGASTVGFLVIDKDGNKDVAADRTIDVTETGEVWIEQGEEQLVTERPEYPAQDTTKAVLHYKRADGNYDGWGLHVWGDAANPTDWAKPLQPVRTDPYGAVFEVPLTDGASSLSYMVHKGDEKDLPTDQAWTSRPTATRCGC</sequence>
<proteinExistence type="evidence at protein level"/>